<dbReference type="EMBL" id="AF156979">
    <property type="protein sequence ID" value="AAG38954.1"/>
    <property type="molecule type" value="mRNA"/>
</dbReference>
<dbReference type="CCDS" id="CCDS41075.1"/>
<dbReference type="RefSeq" id="NP_573468.1">
    <property type="nucleotide sequence ID" value="NM_133205.3"/>
</dbReference>
<dbReference type="SMR" id="Q9EQP6"/>
<dbReference type="BioGRID" id="228402">
    <property type="interactions" value="4"/>
</dbReference>
<dbReference type="FunCoup" id="Q9EQP6">
    <property type="interactions" value="31"/>
</dbReference>
<dbReference type="STRING" id="10090.ENSMUSP00000109398"/>
<dbReference type="iPTMnet" id="Q9EQP6"/>
<dbReference type="PhosphoSitePlus" id="Q9EQP6"/>
<dbReference type="PaxDb" id="10090-ENSMUSP00000109398"/>
<dbReference type="PeptideAtlas" id="Q9EQP6"/>
<dbReference type="ProteomicsDB" id="277235"/>
<dbReference type="Antibodypedia" id="27367">
    <property type="antibodies" value="239 antibodies from 32 providers"/>
</dbReference>
<dbReference type="DNASU" id="170735"/>
<dbReference type="Ensembl" id="ENSMUST00000113769.8">
    <property type="protein sequence ID" value="ENSMUSP00000109398.2"/>
    <property type="gene ID" value="ENSMUSG00000060890.12"/>
</dbReference>
<dbReference type="GeneID" id="170735"/>
<dbReference type="KEGG" id="mmu:170735"/>
<dbReference type="UCSC" id="uc009twd.2">
    <property type="organism name" value="mouse"/>
</dbReference>
<dbReference type="AGR" id="MGI:2159617"/>
<dbReference type="CTD" id="407"/>
<dbReference type="MGI" id="MGI:2159617">
    <property type="gene designation" value="Arr3"/>
</dbReference>
<dbReference type="VEuPathDB" id="HostDB:ENSMUSG00000060890"/>
<dbReference type="eggNOG" id="KOG3865">
    <property type="taxonomic scope" value="Eukaryota"/>
</dbReference>
<dbReference type="GeneTree" id="ENSGT00950000182887"/>
<dbReference type="HOGENOM" id="CLU_033484_0_0_1"/>
<dbReference type="InParanoid" id="Q9EQP6"/>
<dbReference type="OMA" id="NYTKTVC"/>
<dbReference type="OrthoDB" id="298939at2759"/>
<dbReference type="PhylomeDB" id="Q9EQP6"/>
<dbReference type="TreeFam" id="TF314260"/>
<dbReference type="BioGRID-ORCS" id="170735">
    <property type="hits" value="0 hits in 77 CRISPR screens"/>
</dbReference>
<dbReference type="PRO" id="PR:Q9EQP6"/>
<dbReference type="Proteomes" id="UP000000589">
    <property type="component" value="Chromosome X"/>
</dbReference>
<dbReference type="RNAct" id="Q9EQP6">
    <property type="molecule type" value="protein"/>
</dbReference>
<dbReference type="Bgee" id="ENSMUSG00000060890">
    <property type="expression patterns" value="Expressed in retinal neural layer and 21 other cell types or tissues"/>
</dbReference>
<dbReference type="ExpressionAtlas" id="Q9EQP6">
    <property type="expression patterns" value="baseline and differential"/>
</dbReference>
<dbReference type="GO" id="GO:0001917">
    <property type="term" value="C:photoreceptor inner segment"/>
    <property type="evidence" value="ECO:0000266"/>
    <property type="project" value="MGI"/>
</dbReference>
<dbReference type="GO" id="GO:0001750">
    <property type="term" value="C:photoreceptor outer segment"/>
    <property type="evidence" value="ECO:0000314"/>
    <property type="project" value="MGI"/>
</dbReference>
<dbReference type="GO" id="GO:0045202">
    <property type="term" value="C:synapse"/>
    <property type="evidence" value="ECO:0000314"/>
    <property type="project" value="MGI"/>
</dbReference>
<dbReference type="GO" id="GO:0002046">
    <property type="term" value="F:opsin binding"/>
    <property type="evidence" value="ECO:0000314"/>
    <property type="project" value="MGI"/>
</dbReference>
<dbReference type="GO" id="GO:0051219">
    <property type="term" value="F:phosphoprotein binding"/>
    <property type="evidence" value="ECO:0000314"/>
    <property type="project" value="MGI"/>
</dbReference>
<dbReference type="GO" id="GO:0006897">
    <property type="term" value="P:endocytosis"/>
    <property type="evidence" value="ECO:0000314"/>
    <property type="project" value="MGI"/>
</dbReference>
<dbReference type="GO" id="GO:0007165">
    <property type="term" value="P:signal transduction"/>
    <property type="evidence" value="ECO:0007669"/>
    <property type="project" value="InterPro"/>
</dbReference>
<dbReference type="GO" id="GO:0007601">
    <property type="term" value="P:visual perception"/>
    <property type="evidence" value="ECO:0007669"/>
    <property type="project" value="UniProtKB-KW"/>
</dbReference>
<dbReference type="FunFam" id="2.60.40.640:FF:000019">
    <property type="entry name" value="Arrestin 3"/>
    <property type="match status" value="1"/>
</dbReference>
<dbReference type="FunFam" id="2.60.40.840:FF:000002">
    <property type="entry name" value="Arrestin 3"/>
    <property type="match status" value="1"/>
</dbReference>
<dbReference type="Gene3D" id="2.60.40.640">
    <property type="match status" value="1"/>
</dbReference>
<dbReference type="Gene3D" id="2.60.40.840">
    <property type="match status" value="1"/>
</dbReference>
<dbReference type="InterPro" id="IPR000698">
    <property type="entry name" value="Arrestin"/>
</dbReference>
<dbReference type="InterPro" id="IPR014752">
    <property type="entry name" value="Arrestin-like_C"/>
</dbReference>
<dbReference type="InterPro" id="IPR011021">
    <property type="entry name" value="Arrestin-like_N"/>
</dbReference>
<dbReference type="InterPro" id="IPR011022">
    <property type="entry name" value="Arrestin_C-like"/>
</dbReference>
<dbReference type="InterPro" id="IPR017864">
    <property type="entry name" value="Arrestin_CS"/>
</dbReference>
<dbReference type="InterPro" id="IPR014753">
    <property type="entry name" value="Arrestin_N"/>
</dbReference>
<dbReference type="InterPro" id="IPR014756">
    <property type="entry name" value="Ig_E-set"/>
</dbReference>
<dbReference type="PANTHER" id="PTHR11792">
    <property type="entry name" value="ARRESTIN"/>
    <property type="match status" value="1"/>
</dbReference>
<dbReference type="PANTHER" id="PTHR11792:SF19">
    <property type="entry name" value="ARRESTIN-C"/>
    <property type="match status" value="1"/>
</dbReference>
<dbReference type="Pfam" id="PF02752">
    <property type="entry name" value="Arrestin_C"/>
    <property type="match status" value="1"/>
</dbReference>
<dbReference type="Pfam" id="PF00339">
    <property type="entry name" value="Arrestin_N"/>
    <property type="match status" value="1"/>
</dbReference>
<dbReference type="PRINTS" id="PR00309">
    <property type="entry name" value="ARRESTIN"/>
</dbReference>
<dbReference type="SMART" id="SM01017">
    <property type="entry name" value="Arrestin_C"/>
    <property type="match status" value="1"/>
</dbReference>
<dbReference type="SUPFAM" id="SSF81296">
    <property type="entry name" value="E set domains"/>
    <property type="match status" value="2"/>
</dbReference>
<dbReference type="PROSITE" id="PS00295">
    <property type="entry name" value="ARRESTINS"/>
    <property type="match status" value="1"/>
</dbReference>
<sequence length="381" mass="41921">MSTVFKKTSSNGKFSIYLGKRDFVDDVDTVEPIDGVVLVDPEYLEGRKLFVRLTCAFRYGRDDLDVIGLTFRKDLYVQTKQVAPAEPTSIQGPLTALQERLLHKLGVNAYPFTLQMVANLPCSVTLQPGPEDSGKPCGVDFEVKSFCAENLEEKIPKSDSVQLVVRKVQFSALEPGPGPSAQTIRSFFLSSQPLQLQAWMDREVHYHGEAISVHVSINNYTNKVIRRIKIAVVQTTDVVLYSLDKYTKTVFVQEFTETVAANSSFSQTFAVTPLLAANCQKQGLALDGKLKHEDTNLASSTILRPGMNKELLGILVSYKVRVNLVVSYGGILGGLPASDVGVELPVILIHPKPSPGERAVATSSEDIVIEEFMQHNSQTQS</sequence>
<reference key="1">
    <citation type="journal article" date="2002" name="FEBS Lett.">
        <title>Mouse cone arrestin gene characterization: promoter targets expression to cone photoreceptors.</title>
        <authorList>
            <person name="Zhu X."/>
            <person name="Ma B."/>
            <person name="Babu S."/>
            <person name="Murage J."/>
            <person name="Knox B.E."/>
            <person name="Craft C.M."/>
        </authorList>
    </citation>
    <scope>NUCLEOTIDE SEQUENCE [MRNA]</scope>
    <source>
        <tissue>Retina</tissue>
    </source>
</reference>
<reference key="2">
    <citation type="submission" date="2009-01" db="UniProtKB">
        <authorList>
            <person name="Lubec G."/>
            <person name="Sunyer B."/>
            <person name="Chen W.-Q."/>
        </authorList>
    </citation>
    <scope>PROTEIN SEQUENCE OF 310-319</scope>
    <scope>IDENTIFICATION BY MASS SPECTROMETRY</scope>
    <source>
        <strain>OF1</strain>
        <tissue>Hippocampus</tissue>
    </source>
</reference>
<reference key="3">
    <citation type="journal article" date="2017" name="J. Histochem. Cytochem.">
        <title>Immunocytochemical Profiling of Cultured Mouse Primary Retinal Cells.</title>
        <authorList>
            <person name="Zalis M.C."/>
            <person name="Johansson S."/>
            <person name="Englund-Johansson U."/>
        </authorList>
    </citation>
    <scope>SUBCELLULAR LOCATION</scope>
    <scope>DEVELOPMENTAL STAGE</scope>
</reference>
<keyword id="KW-0966">Cell projection</keyword>
<keyword id="KW-0903">Direct protein sequencing</keyword>
<keyword id="KW-1015">Disulfide bond</keyword>
<keyword id="KW-1185">Reference proteome</keyword>
<keyword id="KW-0716">Sensory transduction</keyword>
<keyword id="KW-0844">Vision</keyword>
<protein>
    <recommendedName>
        <fullName>Arrestin-C</fullName>
    </recommendedName>
    <alternativeName>
        <fullName>Cone arrestin</fullName>
        <shortName>cArr</shortName>
    </alternativeName>
    <alternativeName>
        <fullName>Retinal cone arrestin-3</fullName>
    </alternativeName>
</protein>
<gene>
    <name type="primary">Arr3</name>
</gene>
<evidence type="ECO:0000250" key="1">
    <source>
        <dbReference type="UniProtKB" id="P36575"/>
    </source>
</evidence>
<evidence type="ECO:0000250" key="2">
    <source>
        <dbReference type="UniProtKB" id="Q9N0H5"/>
    </source>
</evidence>
<evidence type="ECO:0000269" key="3">
    <source>
    </source>
</evidence>
<evidence type="ECO:0000305" key="4"/>
<accession>Q9EQP6</accession>
<feature type="chain" id="PRO_0000205204" description="Arrestin-C">
    <location>
        <begin position="1"/>
        <end position="381"/>
    </location>
</feature>
<proteinExistence type="evidence at protein level"/>
<name>ARRC_MOUSE</name>
<comment type="function">
    <text>May play a role in an as yet undefined retina-specific signal transduction. Could bind to photoactivated-phosphorylated red/green opsins.</text>
</comment>
<comment type="subunit">
    <text evidence="1 2">Homodimer; disulfide-linked in response to retinal illumination (By similarity). Interacts with CXCR4; the interaction is dependent on the C-terminal phosphorylation of CXCR4 and modulates the calcium ion mobilization activity of CXCR4 (By similarity). Interacts with GPR84 (By similarity).</text>
</comment>
<comment type="subcellular location">
    <subcellularLocation>
        <location evidence="3">Photoreceptor inner segment</location>
    </subcellularLocation>
    <subcellularLocation>
        <location evidence="3">Cell projection</location>
        <location evidence="3">Cilium</location>
        <location evidence="3">Photoreceptor outer segment</location>
    </subcellularLocation>
</comment>
<comment type="tissue specificity">
    <text>Inner and outer segments, and the inner plexiform regions of the retina.</text>
</comment>
<comment type="developmental stage">
    <text evidence="3">At postnatal day 11 (P11) expressed in the soma and photoreceptor processes of the retinal inner segment, outer segment, outer plexiform layer, and inner plexiform layer. Expression in the inner plexiform layer is lost at P22.</text>
</comment>
<comment type="similarity">
    <text evidence="4">Belongs to the arrestin family.</text>
</comment>
<organism>
    <name type="scientific">Mus musculus</name>
    <name type="common">Mouse</name>
    <dbReference type="NCBI Taxonomy" id="10090"/>
    <lineage>
        <taxon>Eukaryota</taxon>
        <taxon>Metazoa</taxon>
        <taxon>Chordata</taxon>
        <taxon>Craniata</taxon>
        <taxon>Vertebrata</taxon>
        <taxon>Euteleostomi</taxon>
        <taxon>Mammalia</taxon>
        <taxon>Eutheria</taxon>
        <taxon>Euarchontoglires</taxon>
        <taxon>Glires</taxon>
        <taxon>Rodentia</taxon>
        <taxon>Myomorpha</taxon>
        <taxon>Muroidea</taxon>
        <taxon>Muridae</taxon>
        <taxon>Murinae</taxon>
        <taxon>Mus</taxon>
        <taxon>Mus</taxon>
    </lineage>
</organism>